<sequence length="432" mass="45986">MVNTTIKTTKSQEVFAAAQNLMPGGVSSPVRAFKSVGGQPIVFDRVKGAYIWDVDGNQYIDYVGTWGPAICGHAHPEVIAALHEALEKGTSFGAPSTLENVLAEMVIDAVPSIEMVRFVNSGTEACMGVLRLMRAFTNRDKIIKFEGCYHGHADTFLVKAGSGVATLGLPDSPGVPKAATSTTLTAPYNDLESVKALFEENRDEIAGVILEPVVGNAGFIAPDAGFLEGLRELTHEYGALLVFDEVMTGFRIAYGGAQEKFGVTPDLTTLGKVIGGGLPVGAYGGRRDIMSMVAPAGPVYQAGTLSGNPLAMTAGIKTLELLQKPGTYDYLERITKKLADGLLQIAKETGHTACGGQISAMFGLFFTSGPVHNYEDAKKSDTAKFGRFHRGMLERGVYLAPSQFEAGFTSFAHTEEDIDQTLAIARDVMSSL</sequence>
<comment type="catalytic activity">
    <reaction evidence="1">
        <text>(S)-4-amino-5-oxopentanoate = 5-aminolevulinate</text>
        <dbReference type="Rhea" id="RHEA:14265"/>
        <dbReference type="ChEBI" id="CHEBI:57501"/>
        <dbReference type="ChEBI" id="CHEBI:356416"/>
        <dbReference type="EC" id="5.4.3.8"/>
    </reaction>
</comment>
<comment type="cofactor">
    <cofactor evidence="1">
        <name>pyridoxal 5'-phosphate</name>
        <dbReference type="ChEBI" id="CHEBI:597326"/>
    </cofactor>
</comment>
<comment type="pathway">
    <text evidence="1">Porphyrin-containing compound metabolism; protoporphyrin-IX biosynthesis; 5-aminolevulinate from L-glutamyl-tRNA(Glu): step 2/2.</text>
</comment>
<comment type="pathway">
    <text evidence="1">Porphyrin-containing compound metabolism; chlorophyll biosynthesis.</text>
</comment>
<comment type="subunit">
    <text evidence="1">Homodimer.</text>
</comment>
<comment type="subcellular location">
    <subcellularLocation>
        <location evidence="1">Cytoplasm</location>
    </subcellularLocation>
</comment>
<comment type="similarity">
    <text evidence="1">Belongs to the class-III pyridoxal-phosphate-dependent aminotransferase family. HemL subfamily.</text>
</comment>
<gene>
    <name evidence="1" type="primary">hemL</name>
    <name type="ordered locus">Npun_R4096</name>
</gene>
<feature type="chain" id="PRO_1000121905" description="Glutamate-1-semialdehyde 2,1-aminomutase">
    <location>
        <begin position="1"/>
        <end position="432"/>
    </location>
</feature>
<feature type="modified residue" description="N6-(pyridoxal phosphate)lysine" evidence="1">
    <location>
        <position position="272"/>
    </location>
</feature>
<reference key="1">
    <citation type="journal article" date="2013" name="Plant Physiol.">
        <title>A Nostoc punctiforme Sugar Transporter Necessary to Establish a Cyanobacterium-Plant Symbiosis.</title>
        <authorList>
            <person name="Ekman M."/>
            <person name="Picossi S."/>
            <person name="Campbell E.L."/>
            <person name="Meeks J.C."/>
            <person name="Flores E."/>
        </authorList>
    </citation>
    <scope>NUCLEOTIDE SEQUENCE [LARGE SCALE GENOMIC DNA]</scope>
    <source>
        <strain>ATCC 29133 / PCC 73102</strain>
    </source>
</reference>
<organism>
    <name type="scientific">Nostoc punctiforme (strain ATCC 29133 / PCC 73102)</name>
    <dbReference type="NCBI Taxonomy" id="63737"/>
    <lineage>
        <taxon>Bacteria</taxon>
        <taxon>Bacillati</taxon>
        <taxon>Cyanobacteriota</taxon>
        <taxon>Cyanophyceae</taxon>
        <taxon>Nostocales</taxon>
        <taxon>Nostocaceae</taxon>
        <taxon>Nostoc</taxon>
    </lineage>
</organism>
<dbReference type="EC" id="5.4.3.8" evidence="1"/>
<dbReference type="EMBL" id="CP001037">
    <property type="protein sequence ID" value="ACC82474.1"/>
    <property type="molecule type" value="Genomic_DNA"/>
</dbReference>
<dbReference type="RefSeq" id="WP_012410441.1">
    <property type="nucleotide sequence ID" value="NC_010628.1"/>
</dbReference>
<dbReference type="SMR" id="B2J7M9"/>
<dbReference type="STRING" id="63737.Npun_R4096"/>
<dbReference type="EnsemblBacteria" id="ACC82474">
    <property type="protein sequence ID" value="ACC82474"/>
    <property type="gene ID" value="Npun_R4096"/>
</dbReference>
<dbReference type="KEGG" id="npu:Npun_R4096"/>
<dbReference type="eggNOG" id="COG0001">
    <property type="taxonomic scope" value="Bacteria"/>
</dbReference>
<dbReference type="HOGENOM" id="CLU_016922_1_5_3"/>
<dbReference type="OrthoDB" id="9807885at2"/>
<dbReference type="PhylomeDB" id="B2J7M9"/>
<dbReference type="UniPathway" id="UPA00251">
    <property type="reaction ID" value="UER00317"/>
</dbReference>
<dbReference type="UniPathway" id="UPA00668"/>
<dbReference type="Proteomes" id="UP000001191">
    <property type="component" value="Chromosome"/>
</dbReference>
<dbReference type="GO" id="GO:0005737">
    <property type="term" value="C:cytoplasm"/>
    <property type="evidence" value="ECO:0007669"/>
    <property type="project" value="UniProtKB-SubCell"/>
</dbReference>
<dbReference type="GO" id="GO:0042286">
    <property type="term" value="F:glutamate-1-semialdehyde 2,1-aminomutase activity"/>
    <property type="evidence" value="ECO:0007669"/>
    <property type="project" value="UniProtKB-UniRule"/>
</dbReference>
<dbReference type="GO" id="GO:0030170">
    <property type="term" value="F:pyridoxal phosphate binding"/>
    <property type="evidence" value="ECO:0007669"/>
    <property type="project" value="InterPro"/>
</dbReference>
<dbReference type="GO" id="GO:0008483">
    <property type="term" value="F:transaminase activity"/>
    <property type="evidence" value="ECO:0007669"/>
    <property type="project" value="InterPro"/>
</dbReference>
<dbReference type="GO" id="GO:0015995">
    <property type="term" value="P:chlorophyll biosynthetic process"/>
    <property type="evidence" value="ECO:0007669"/>
    <property type="project" value="UniProtKB-UniRule"/>
</dbReference>
<dbReference type="GO" id="GO:0006782">
    <property type="term" value="P:protoporphyrinogen IX biosynthetic process"/>
    <property type="evidence" value="ECO:0007669"/>
    <property type="project" value="UniProtKB-UniRule"/>
</dbReference>
<dbReference type="CDD" id="cd00610">
    <property type="entry name" value="OAT_like"/>
    <property type="match status" value="1"/>
</dbReference>
<dbReference type="FunFam" id="3.40.640.10:FF:000021">
    <property type="entry name" value="Glutamate-1-semialdehyde 2,1-aminomutase"/>
    <property type="match status" value="1"/>
</dbReference>
<dbReference type="FunFam" id="3.90.1150.10:FF:000012">
    <property type="entry name" value="Glutamate-1-semialdehyde 2,1-aminomutase"/>
    <property type="match status" value="1"/>
</dbReference>
<dbReference type="Gene3D" id="3.90.1150.10">
    <property type="entry name" value="Aspartate Aminotransferase, domain 1"/>
    <property type="match status" value="1"/>
</dbReference>
<dbReference type="Gene3D" id="3.40.640.10">
    <property type="entry name" value="Type I PLP-dependent aspartate aminotransferase-like (Major domain)"/>
    <property type="match status" value="1"/>
</dbReference>
<dbReference type="HAMAP" id="MF_00375">
    <property type="entry name" value="HemL_aminotrans_3"/>
    <property type="match status" value="1"/>
</dbReference>
<dbReference type="InterPro" id="IPR004639">
    <property type="entry name" value="4pyrrol_synth_GluAld_NH2Trfase"/>
</dbReference>
<dbReference type="InterPro" id="IPR005814">
    <property type="entry name" value="Aminotrans_3"/>
</dbReference>
<dbReference type="InterPro" id="IPR049704">
    <property type="entry name" value="Aminotrans_3_PPA_site"/>
</dbReference>
<dbReference type="InterPro" id="IPR015424">
    <property type="entry name" value="PyrdxlP-dep_Trfase"/>
</dbReference>
<dbReference type="InterPro" id="IPR015421">
    <property type="entry name" value="PyrdxlP-dep_Trfase_major"/>
</dbReference>
<dbReference type="InterPro" id="IPR015422">
    <property type="entry name" value="PyrdxlP-dep_Trfase_small"/>
</dbReference>
<dbReference type="NCBIfam" id="TIGR00713">
    <property type="entry name" value="hemL"/>
    <property type="match status" value="1"/>
</dbReference>
<dbReference type="NCBIfam" id="NF000818">
    <property type="entry name" value="PRK00062.1"/>
    <property type="match status" value="1"/>
</dbReference>
<dbReference type="PANTHER" id="PTHR43713">
    <property type="entry name" value="GLUTAMATE-1-SEMIALDEHYDE 2,1-AMINOMUTASE"/>
    <property type="match status" value="1"/>
</dbReference>
<dbReference type="PANTHER" id="PTHR43713:SF3">
    <property type="entry name" value="GLUTAMATE-1-SEMIALDEHYDE 2,1-AMINOMUTASE 1, CHLOROPLASTIC-RELATED"/>
    <property type="match status" value="1"/>
</dbReference>
<dbReference type="Pfam" id="PF00202">
    <property type="entry name" value="Aminotran_3"/>
    <property type="match status" value="1"/>
</dbReference>
<dbReference type="SUPFAM" id="SSF53383">
    <property type="entry name" value="PLP-dependent transferases"/>
    <property type="match status" value="1"/>
</dbReference>
<dbReference type="PROSITE" id="PS00600">
    <property type="entry name" value="AA_TRANSFER_CLASS_3"/>
    <property type="match status" value="1"/>
</dbReference>
<protein>
    <recommendedName>
        <fullName evidence="1">Glutamate-1-semialdehyde 2,1-aminomutase</fullName>
        <shortName evidence="1">GSA</shortName>
        <ecNumber evidence="1">5.4.3.8</ecNumber>
    </recommendedName>
    <alternativeName>
        <fullName evidence="1">Glutamate-1-semialdehyde aminotransferase</fullName>
        <shortName evidence="1">GSA-AT</shortName>
    </alternativeName>
</protein>
<evidence type="ECO:0000255" key="1">
    <source>
        <dbReference type="HAMAP-Rule" id="MF_00375"/>
    </source>
</evidence>
<accession>B2J7M9</accession>
<name>GSA_NOSP7</name>
<proteinExistence type="inferred from homology"/>
<keyword id="KW-0149">Chlorophyll biosynthesis</keyword>
<keyword id="KW-0963">Cytoplasm</keyword>
<keyword id="KW-0413">Isomerase</keyword>
<keyword id="KW-0627">Porphyrin biosynthesis</keyword>
<keyword id="KW-0663">Pyridoxal phosphate</keyword>
<keyword id="KW-1185">Reference proteome</keyword>